<gene>
    <name type="primary">yjfY</name>
    <name type="ordered locus">Z5808</name>
    <name type="ordered locus">ECs5175</name>
</gene>
<protein>
    <recommendedName>
        <fullName>Uncharacterized protein YjfY</fullName>
    </recommendedName>
</protein>
<organism>
    <name type="scientific">Escherichia coli O157:H7</name>
    <dbReference type="NCBI Taxonomy" id="83334"/>
    <lineage>
        <taxon>Bacteria</taxon>
        <taxon>Pseudomonadati</taxon>
        <taxon>Pseudomonadota</taxon>
        <taxon>Gammaproteobacteria</taxon>
        <taxon>Enterobacterales</taxon>
        <taxon>Enterobacteriaceae</taxon>
        <taxon>Escherichia</taxon>
    </lineage>
</organism>
<reference key="1">
    <citation type="journal article" date="2001" name="Nature">
        <title>Genome sequence of enterohaemorrhagic Escherichia coli O157:H7.</title>
        <authorList>
            <person name="Perna N.T."/>
            <person name="Plunkett G. III"/>
            <person name="Burland V."/>
            <person name="Mau B."/>
            <person name="Glasner J.D."/>
            <person name="Rose D.J."/>
            <person name="Mayhew G.F."/>
            <person name="Evans P.S."/>
            <person name="Gregor J."/>
            <person name="Kirkpatrick H.A."/>
            <person name="Posfai G."/>
            <person name="Hackett J."/>
            <person name="Klink S."/>
            <person name="Boutin A."/>
            <person name="Shao Y."/>
            <person name="Miller L."/>
            <person name="Grotbeck E.J."/>
            <person name="Davis N.W."/>
            <person name="Lim A."/>
            <person name="Dimalanta E.T."/>
            <person name="Potamousis K."/>
            <person name="Apodaca J."/>
            <person name="Anantharaman T.S."/>
            <person name="Lin J."/>
            <person name="Yen G."/>
            <person name="Schwartz D.C."/>
            <person name="Welch R.A."/>
            <person name="Blattner F.R."/>
        </authorList>
    </citation>
    <scope>NUCLEOTIDE SEQUENCE [LARGE SCALE GENOMIC DNA]</scope>
    <source>
        <strain>O157:H7 / EDL933 / ATCC 700927 / EHEC</strain>
    </source>
</reference>
<reference key="2">
    <citation type="journal article" date="2001" name="DNA Res.">
        <title>Complete genome sequence of enterohemorrhagic Escherichia coli O157:H7 and genomic comparison with a laboratory strain K-12.</title>
        <authorList>
            <person name="Hayashi T."/>
            <person name="Makino K."/>
            <person name="Ohnishi M."/>
            <person name="Kurokawa K."/>
            <person name="Ishii K."/>
            <person name="Yokoyama K."/>
            <person name="Han C.-G."/>
            <person name="Ohtsubo E."/>
            <person name="Nakayama K."/>
            <person name="Murata T."/>
            <person name="Tanaka M."/>
            <person name="Tobe T."/>
            <person name="Iida T."/>
            <person name="Takami H."/>
            <person name="Honda T."/>
            <person name="Sasakawa C."/>
            <person name="Ogasawara N."/>
            <person name="Yasunaga T."/>
            <person name="Kuhara S."/>
            <person name="Shiba T."/>
            <person name="Hattori M."/>
            <person name="Shinagawa H."/>
        </authorList>
    </citation>
    <scope>NUCLEOTIDE SEQUENCE [LARGE SCALE GENOMIC DNA]</scope>
    <source>
        <strain>O157:H7 / Sakai / RIMD 0509952 / EHEC</strain>
    </source>
</reference>
<name>YJFY_ECO57</name>
<keyword id="KW-0574">Periplasm</keyword>
<keyword id="KW-1185">Reference proteome</keyword>
<keyword id="KW-0732">Signal</keyword>
<evidence type="ECO:0000255" key="1"/>
<evidence type="ECO:0000305" key="2"/>
<feature type="signal peptide" evidence="1">
    <location>
        <begin position="1"/>
        <end position="20"/>
    </location>
</feature>
<feature type="chain" id="PRO_0000044597" description="Uncharacterized protein YjfY">
    <location>
        <begin position="21"/>
        <end position="91"/>
    </location>
</feature>
<comment type="subcellular location">
    <subcellularLocation>
        <location evidence="2">Periplasm</location>
    </subcellularLocation>
</comment>
<comment type="similarity">
    <text evidence="2">Belongs to the BhsA/McbA family.</text>
</comment>
<sequence length="91" mass="10149">MFSRVLALLAVLLLSANTWAAIEINNHQARNMDDVQSLGVIYINHNFATESEARQALNEETDAQGATYYHVILMREPGSNGNMHASADIYR</sequence>
<accession>P0AF88</accession>
<accession>P39307</accession>
<dbReference type="EMBL" id="AE005174">
    <property type="protein sequence ID" value="AAG59395.1"/>
    <property type="molecule type" value="Genomic_DNA"/>
</dbReference>
<dbReference type="EMBL" id="BA000007">
    <property type="protein sequence ID" value="BAB38598.1"/>
    <property type="molecule type" value="Genomic_DNA"/>
</dbReference>
<dbReference type="PIR" id="G86116">
    <property type="entry name" value="G86116"/>
</dbReference>
<dbReference type="PIR" id="G91275">
    <property type="entry name" value="G91275"/>
</dbReference>
<dbReference type="RefSeq" id="NP_313202.1">
    <property type="nucleotide sequence ID" value="NC_002695.1"/>
</dbReference>
<dbReference type="RefSeq" id="WP_000492914.1">
    <property type="nucleotide sequence ID" value="NZ_VOAI01000008.1"/>
</dbReference>
<dbReference type="SMR" id="P0AF88"/>
<dbReference type="STRING" id="155864.Z5808"/>
<dbReference type="GeneID" id="913992"/>
<dbReference type="GeneID" id="93777624"/>
<dbReference type="KEGG" id="ece:Z5808"/>
<dbReference type="KEGG" id="ecs:ECs_5175"/>
<dbReference type="PATRIC" id="fig|386585.9.peg.5409"/>
<dbReference type="eggNOG" id="ENOG5032SRX">
    <property type="taxonomic scope" value="Bacteria"/>
</dbReference>
<dbReference type="HOGENOM" id="CLU_158602_0_0_6"/>
<dbReference type="OMA" id="PILIHEP"/>
<dbReference type="Proteomes" id="UP000000558">
    <property type="component" value="Chromosome"/>
</dbReference>
<dbReference type="Proteomes" id="UP000002519">
    <property type="component" value="Chromosome"/>
</dbReference>
<dbReference type="GO" id="GO:0042597">
    <property type="term" value="C:periplasmic space"/>
    <property type="evidence" value="ECO:0007669"/>
    <property type="project" value="UniProtKB-SubCell"/>
</dbReference>
<dbReference type="Gene3D" id="3.30.1660.10">
    <property type="entry name" value="Flavin-binding protein dodecin"/>
    <property type="match status" value="1"/>
</dbReference>
<dbReference type="InterPro" id="IPR051096">
    <property type="entry name" value="BhsA/McbA_stress_biofilm_assoc"/>
</dbReference>
<dbReference type="InterPro" id="IPR025543">
    <property type="entry name" value="Dodecin-like"/>
</dbReference>
<dbReference type="InterPro" id="IPR036275">
    <property type="entry name" value="YdgH-like_sf"/>
</dbReference>
<dbReference type="InterPro" id="IPR010854">
    <property type="entry name" value="YdgH/BhsA/McbA-like_dom"/>
</dbReference>
<dbReference type="PANTHER" id="PTHR34156:SF6">
    <property type="entry name" value="OUTER MEMBRANE PROTEIN"/>
    <property type="match status" value="1"/>
</dbReference>
<dbReference type="PANTHER" id="PTHR34156">
    <property type="entry name" value="OUTER MEMBRANE PROTEIN-RELATED-RELATED"/>
    <property type="match status" value="1"/>
</dbReference>
<dbReference type="Pfam" id="PF07338">
    <property type="entry name" value="YdgH_BhsA-like"/>
    <property type="match status" value="1"/>
</dbReference>
<dbReference type="SUPFAM" id="SSF159871">
    <property type="entry name" value="YdgH-like"/>
    <property type="match status" value="1"/>
</dbReference>
<proteinExistence type="inferred from homology"/>